<protein>
    <recommendedName>
        <fullName evidence="1 4">Coproporphyrin III ferrochelatase</fullName>
        <ecNumber evidence="1 2">4.99.1.9</ecNumber>
    </recommendedName>
</protein>
<proteinExistence type="evidence at protein level"/>
<name>CPFC_LISMO</name>
<reference key="1">
    <citation type="journal article" date="2001" name="Science">
        <title>Comparative genomics of Listeria species.</title>
        <authorList>
            <person name="Glaser P."/>
            <person name="Frangeul L."/>
            <person name="Buchrieser C."/>
            <person name="Rusniok C."/>
            <person name="Amend A."/>
            <person name="Baquero F."/>
            <person name="Berche P."/>
            <person name="Bloecker H."/>
            <person name="Brandt P."/>
            <person name="Chakraborty T."/>
            <person name="Charbit A."/>
            <person name="Chetouani F."/>
            <person name="Couve E."/>
            <person name="de Daruvar A."/>
            <person name="Dehoux P."/>
            <person name="Domann E."/>
            <person name="Dominguez-Bernal G."/>
            <person name="Duchaud E."/>
            <person name="Durant L."/>
            <person name="Dussurget O."/>
            <person name="Entian K.-D."/>
            <person name="Fsihi H."/>
            <person name="Garcia-del Portillo F."/>
            <person name="Garrido P."/>
            <person name="Gautier L."/>
            <person name="Goebel W."/>
            <person name="Gomez-Lopez N."/>
            <person name="Hain T."/>
            <person name="Hauf J."/>
            <person name="Jackson D."/>
            <person name="Jones L.-M."/>
            <person name="Kaerst U."/>
            <person name="Kreft J."/>
            <person name="Kuhn M."/>
            <person name="Kunst F."/>
            <person name="Kurapkat G."/>
            <person name="Madueno E."/>
            <person name="Maitournam A."/>
            <person name="Mata Vicente J."/>
            <person name="Ng E."/>
            <person name="Nedjari H."/>
            <person name="Nordsiek G."/>
            <person name="Novella S."/>
            <person name="de Pablos B."/>
            <person name="Perez-Diaz J.-C."/>
            <person name="Purcell R."/>
            <person name="Remmel B."/>
            <person name="Rose M."/>
            <person name="Schlueter T."/>
            <person name="Simoes N."/>
            <person name="Tierrez A."/>
            <person name="Vazquez-Boland J.-A."/>
            <person name="Voss H."/>
            <person name="Wehland J."/>
            <person name="Cossart P."/>
        </authorList>
    </citation>
    <scope>NUCLEOTIDE SEQUENCE [LARGE SCALE GENOMIC DNA]</scope>
    <source>
        <strain>ATCC BAA-679 / EGD-e</strain>
    </source>
</reference>
<reference evidence="5 6" key="2">
    <citation type="journal article" date="2020" name="FEBS J.">
        <title>Crystal structures and calorimetry reveal catalytically relevant binding mode of coproporphyrin and coproheme in coproporphyrin ferrochelatase.</title>
        <authorList>
            <person name="Hofbauer S."/>
            <person name="Helm J."/>
            <person name="Obinger C."/>
            <person name="Djinovic-Carugo K."/>
            <person name="Furtmueller P.G."/>
        </authorList>
    </citation>
    <scope>X-RAY CRYSTALLOGRAPHY (1.64 ANGSTROMS) OF APOENZYME AND IN COMPLEX WITH FE-COPROPORPHYRIN III</scope>
    <scope>FUNCTION</scope>
    <scope>CATALYTIC ACTIVITY</scope>
    <scope>BIOPHYSICOCHEMICAL PROPERTIES</scope>
    <scope>PATHWAY</scope>
    <scope>SUBUNIT</scope>
</reference>
<accession>Q8Y565</accession>
<feature type="chain" id="PRO_0000175161" description="Coproporphyrin III ferrochelatase">
    <location>
        <begin position="1"/>
        <end position="309"/>
    </location>
</feature>
<feature type="binding site" description="axial binding residue" evidence="1 2 6">
    <location>
        <position position="12"/>
    </location>
    <ligand>
        <name>Fe-coproporphyrin III</name>
        <dbReference type="ChEBI" id="CHEBI:68438"/>
    </ligand>
    <ligandPart>
        <name>Fe</name>
        <dbReference type="ChEBI" id="CHEBI:18248"/>
    </ligandPart>
</feature>
<feature type="binding site" evidence="1 2 6">
    <location>
        <position position="14"/>
    </location>
    <ligand>
        <name>Fe-coproporphyrin III</name>
        <dbReference type="ChEBI" id="CHEBI:68438"/>
    </ligand>
</feature>
<feature type="binding site" evidence="1 2 6">
    <location>
        <position position="29"/>
    </location>
    <ligand>
        <name>Fe-coproporphyrin III</name>
        <dbReference type="ChEBI" id="CHEBI:68438"/>
    </ligand>
</feature>
<feature type="binding site" evidence="1 2 6">
    <location>
        <begin position="45"/>
        <end position="46"/>
    </location>
    <ligand>
        <name>Fe-coproporphyrin III</name>
        <dbReference type="ChEBI" id="CHEBI:68438"/>
    </ligand>
</feature>
<feature type="binding site" evidence="1 2 6">
    <location>
        <position position="53"/>
    </location>
    <ligand>
        <name>Fe-coproporphyrin III</name>
        <dbReference type="ChEBI" id="CHEBI:68438"/>
    </ligand>
</feature>
<feature type="binding site" evidence="1 2 6">
    <location>
        <position position="124"/>
    </location>
    <ligand>
        <name>Fe-coproporphyrin III</name>
        <dbReference type="ChEBI" id="CHEBI:68438"/>
    </ligand>
</feature>
<feature type="binding site" evidence="1">
    <location>
        <position position="182"/>
    </location>
    <ligand>
        <name>Fe(2+)</name>
        <dbReference type="ChEBI" id="CHEBI:29033"/>
    </ligand>
</feature>
<feature type="binding site" evidence="1">
    <location>
        <position position="263"/>
    </location>
    <ligand>
        <name>Fe(2+)</name>
        <dbReference type="ChEBI" id="CHEBI:29033"/>
    </ligand>
</feature>
<feature type="strand" evidence="8">
    <location>
        <begin position="5"/>
        <end position="11"/>
    </location>
</feature>
<feature type="helix" evidence="8">
    <location>
        <begin position="18"/>
        <end position="20"/>
    </location>
</feature>
<feature type="helix" evidence="8">
    <location>
        <begin position="21"/>
        <end position="28"/>
    </location>
</feature>
<feature type="turn" evidence="8">
    <location>
        <begin position="29"/>
        <end position="31"/>
    </location>
</feature>
<feature type="helix" evidence="8">
    <location>
        <begin position="36"/>
        <end position="48"/>
    </location>
</feature>
<feature type="helix" evidence="8">
    <location>
        <begin position="55"/>
        <end position="73"/>
    </location>
</feature>
<feature type="strand" evidence="8">
    <location>
        <begin position="79"/>
        <end position="91"/>
    </location>
</feature>
<feature type="helix" evidence="8">
    <location>
        <begin position="92"/>
        <end position="101"/>
    </location>
</feature>
<feature type="strand" evidence="8">
    <location>
        <begin position="106"/>
        <end position="115"/>
    </location>
</feature>
<feature type="turn" evidence="8">
    <location>
        <begin position="118"/>
        <end position="120"/>
    </location>
</feature>
<feature type="helix" evidence="8">
    <location>
        <begin position="121"/>
        <end position="135"/>
    </location>
</feature>
<feature type="strand" evidence="8">
    <location>
        <begin position="139"/>
        <end position="142"/>
    </location>
</feature>
<feature type="helix" evidence="8">
    <location>
        <begin position="150"/>
        <end position="164"/>
    </location>
</feature>
<feature type="helix" evidence="8">
    <location>
        <begin position="169"/>
        <end position="172"/>
    </location>
</feature>
<feature type="strand" evidence="8">
    <location>
        <begin position="175"/>
        <end position="182"/>
    </location>
</feature>
<feature type="helix" evidence="8">
    <location>
        <begin position="186"/>
        <end position="191"/>
    </location>
</feature>
<feature type="helix" evidence="8">
    <location>
        <begin position="195"/>
        <end position="207"/>
    </location>
</feature>
<feature type="strand" evidence="8">
    <location>
        <begin position="214"/>
        <end position="220"/>
    </location>
</feature>
<feature type="strand" evidence="7">
    <location>
        <begin position="225"/>
        <end position="227"/>
    </location>
</feature>
<feature type="strand" evidence="8">
    <location>
        <begin position="229"/>
        <end position="231"/>
    </location>
</feature>
<feature type="helix" evidence="8">
    <location>
        <begin position="234"/>
        <end position="245"/>
    </location>
</feature>
<feature type="strand" evidence="8">
    <location>
        <begin position="248"/>
        <end position="253"/>
    </location>
</feature>
<feature type="helix" evidence="8">
    <location>
        <begin position="262"/>
        <end position="265"/>
    </location>
</feature>
<feature type="turn" evidence="8">
    <location>
        <begin position="266"/>
        <end position="270"/>
    </location>
</feature>
<feature type="helix" evidence="8">
    <location>
        <begin position="271"/>
        <end position="279"/>
    </location>
</feature>
<feature type="strand" evidence="8">
    <location>
        <begin position="282"/>
        <end position="284"/>
    </location>
</feature>
<feature type="helix" evidence="8">
    <location>
        <begin position="293"/>
        <end position="309"/>
    </location>
</feature>
<evidence type="ECO:0000255" key="1">
    <source>
        <dbReference type="HAMAP-Rule" id="MF_00323"/>
    </source>
</evidence>
<evidence type="ECO:0000269" key="2">
    <source>
    </source>
</evidence>
<evidence type="ECO:0000303" key="3">
    <source>
    </source>
</evidence>
<evidence type="ECO:0000305" key="4"/>
<evidence type="ECO:0007744" key="5">
    <source>
        <dbReference type="PDB" id="6RWV"/>
    </source>
</evidence>
<evidence type="ECO:0007744" key="6">
    <source>
        <dbReference type="PDB" id="6SV3"/>
    </source>
</evidence>
<evidence type="ECO:0007829" key="7">
    <source>
        <dbReference type="PDB" id="6RWV"/>
    </source>
</evidence>
<evidence type="ECO:0007829" key="8">
    <source>
        <dbReference type="PDB" id="8AT8"/>
    </source>
</evidence>
<comment type="function">
    <text evidence="2">Involved in coproporphyrin-dependent heme b biosynthesis (PubMed:31794133). Catalyzes the insertion of ferrous iron into coproporphyrin III to form Fe-coproporphyrin III (PubMed:31794133).</text>
</comment>
<comment type="catalytic activity">
    <reaction evidence="1 2">
        <text>Fe-coproporphyrin III + 2 H(+) = coproporphyrin III + Fe(2+)</text>
        <dbReference type="Rhea" id="RHEA:49572"/>
        <dbReference type="ChEBI" id="CHEBI:15378"/>
        <dbReference type="ChEBI" id="CHEBI:29033"/>
        <dbReference type="ChEBI" id="CHEBI:68438"/>
        <dbReference type="ChEBI" id="CHEBI:131725"/>
        <dbReference type="EC" id="4.99.1.9"/>
    </reaction>
    <physiologicalReaction direction="right-to-left" evidence="1 2">
        <dbReference type="Rhea" id="RHEA:49574"/>
    </physiologicalReaction>
</comment>
<comment type="biophysicochemical properties">
    <kinetics>
        <KM evidence="2">0.28 uM for Fe(2+)</KM>
        <text evidence="2">kcat is 7.9 min(-1).</text>
    </kinetics>
</comment>
<comment type="pathway">
    <text evidence="1 2">Porphyrin-containing compound metabolism; protoheme biosynthesis.</text>
</comment>
<comment type="subunit">
    <text evidence="2">Monomer.</text>
</comment>
<comment type="subcellular location">
    <subcellularLocation>
        <location evidence="1">Cytoplasm</location>
    </subcellularLocation>
</comment>
<comment type="similarity">
    <text evidence="1 4">Belongs to the ferrochelatase family.</text>
</comment>
<keyword id="KW-0002">3D-structure</keyword>
<keyword id="KW-0963">Cytoplasm</keyword>
<keyword id="KW-0350">Heme biosynthesis</keyword>
<keyword id="KW-0408">Iron</keyword>
<keyword id="KW-0456">Lyase</keyword>
<keyword id="KW-0479">Metal-binding</keyword>
<keyword id="KW-0627">Porphyrin biosynthesis</keyword>
<keyword id="KW-1185">Reference proteome</keyword>
<dbReference type="EC" id="4.99.1.9" evidence="1 2"/>
<dbReference type="EMBL" id="AL591982">
    <property type="protein sequence ID" value="CAD00289.1"/>
    <property type="molecule type" value="Genomic_DNA"/>
</dbReference>
<dbReference type="PIR" id="AC1351">
    <property type="entry name" value="AC1351"/>
</dbReference>
<dbReference type="RefSeq" id="NP_465735.1">
    <property type="nucleotide sequence ID" value="NC_003210.1"/>
</dbReference>
<dbReference type="RefSeq" id="WP_010989926.1">
    <property type="nucleotide sequence ID" value="NZ_CP149495.1"/>
</dbReference>
<dbReference type="PDB" id="6RWV">
    <property type="method" value="X-ray"/>
    <property type="resolution" value="1.64 A"/>
    <property type="chains" value="A=1-309"/>
</dbReference>
<dbReference type="PDB" id="6SV3">
    <property type="method" value="X-ray"/>
    <property type="resolution" value="1.64 A"/>
    <property type="chains" value="A=1-309"/>
</dbReference>
<dbReference type="PDB" id="8AT8">
    <property type="method" value="X-ray"/>
    <property type="resolution" value="1.51 A"/>
    <property type="chains" value="A=1-309"/>
</dbReference>
<dbReference type="PDB" id="8AW7">
    <property type="method" value="X-ray"/>
    <property type="resolution" value="2.64 A"/>
    <property type="chains" value="A=1-309"/>
</dbReference>
<dbReference type="PDB" id="8BBV">
    <property type="method" value="X-ray"/>
    <property type="resolution" value="2.19 A"/>
    <property type="chains" value="A=1-309"/>
</dbReference>
<dbReference type="PDB" id="8OFL">
    <property type="method" value="X-ray"/>
    <property type="resolution" value="1.90 A"/>
    <property type="chains" value="A=1-309"/>
</dbReference>
<dbReference type="PDB" id="9F0F">
    <property type="method" value="X-ray"/>
    <property type="resolution" value="2.10 A"/>
    <property type="chains" value="A=1-309"/>
</dbReference>
<dbReference type="PDB" id="9F0G">
    <property type="method" value="X-ray"/>
    <property type="resolution" value="1.85 A"/>
    <property type="chains" value="A=1-309"/>
</dbReference>
<dbReference type="PDBsum" id="6RWV"/>
<dbReference type="PDBsum" id="6SV3"/>
<dbReference type="PDBsum" id="8AT8"/>
<dbReference type="PDBsum" id="8AW7"/>
<dbReference type="PDBsum" id="8BBV"/>
<dbReference type="PDBsum" id="8OFL"/>
<dbReference type="PDBsum" id="9F0F"/>
<dbReference type="PDBsum" id="9F0G"/>
<dbReference type="SMR" id="Q8Y565"/>
<dbReference type="STRING" id="169963.gene:17594902"/>
<dbReference type="PaxDb" id="169963-lmo2211"/>
<dbReference type="EnsemblBacteria" id="CAD00289">
    <property type="protein sequence ID" value="CAD00289"/>
    <property type="gene ID" value="CAD00289"/>
</dbReference>
<dbReference type="GeneID" id="984632"/>
<dbReference type="KEGG" id="lmo:lmo2211"/>
<dbReference type="PATRIC" id="fig|169963.11.peg.2263"/>
<dbReference type="eggNOG" id="COG0276">
    <property type="taxonomic scope" value="Bacteria"/>
</dbReference>
<dbReference type="HOGENOM" id="CLU_018884_2_1_9"/>
<dbReference type="OrthoDB" id="9776380at2"/>
<dbReference type="PhylomeDB" id="Q8Y565"/>
<dbReference type="BioCyc" id="LMON169963:LMO2211-MONOMER"/>
<dbReference type="UniPathway" id="UPA00252"/>
<dbReference type="Proteomes" id="UP000000817">
    <property type="component" value="Chromosome"/>
</dbReference>
<dbReference type="GO" id="GO:0005737">
    <property type="term" value="C:cytoplasm"/>
    <property type="evidence" value="ECO:0007669"/>
    <property type="project" value="UniProtKB-SubCell"/>
</dbReference>
<dbReference type="GO" id="GO:0004325">
    <property type="term" value="F:ferrochelatase activity"/>
    <property type="evidence" value="ECO:0000318"/>
    <property type="project" value="GO_Central"/>
</dbReference>
<dbReference type="GO" id="GO:0046872">
    <property type="term" value="F:metal ion binding"/>
    <property type="evidence" value="ECO:0007669"/>
    <property type="project" value="UniProtKB-KW"/>
</dbReference>
<dbReference type="GO" id="GO:0006783">
    <property type="term" value="P:heme biosynthetic process"/>
    <property type="evidence" value="ECO:0000318"/>
    <property type="project" value="GO_Central"/>
</dbReference>
<dbReference type="CDD" id="cd00419">
    <property type="entry name" value="Ferrochelatase_C"/>
    <property type="match status" value="1"/>
</dbReference>
<dbReference type="CDD" id="cd03411">
    <property type="entry name" value="Ferrochelatase_N"/>
    <property type="match status" value="1"/>
</dbReference>
<dbReference type="FunFam" id="3.40.50.1400:FF:000009">
    <property type="entry name" value="Ferrochelatase"/>
    <property type="match status" value="1"/>
</dbReference>
<dbReference type="Gene3D" id="3.40.50.1400">
    <property type="match status" value="2"/>
</dbReference>
<dbReference type="HAMAP" id="MF_00323">
    <property type="entry name" value="Ferrochelatase"/>
    <property type="match status" value="1"/>
</dbReference>
<dbReference type="InterPro" id="IPR001015">
    <property type="entry name" value="Ferrochelatase"/>
</dbReference>
<dbReference type="InterPro" id="IPR019772">
    <property type="entry name" value="Ferrochelatase_AS"/>
</dbReference>
<dbReference type="InterPro" id="IPR033644">
    <property type="entry name" value="Ferrochelatase_C"/>
</dbReference>
<dbReference type="InterPro" id="IPR033659">
    <property type="entry name" value="Ferrochelatase_N"/>
</dbReference>
<dbReference type="NCBIfam" id="TIGR00109">
    <property type="entry name" value="hemH"/>
    <property type="match status" value="1"/>
</dbReference>
<dbReference type="NCBIfam" id="NF009095">
    <property type="entry name" value="PRK12435.1"/>
    <property type="match status" value="1"/>
</dbReference>
<dbReference type="PANTHER" id="PTHR11108">
    <property type="entry name" value="FERROCHELATASE"/>
    <property type="match status" value="1"/>
</dbReference>
<dbReference type="PANTHER" id="PTHR11108:SF1">
    <property type="entry name" value="FERROCHELATASE, MITOCHONDRIAL"/>
    <property type="match status" value="1"/>
</dbReference>
<dbReference type="Pfam" id="PF00762">
    <property type="entry name" value="Ferrochelatase"/>
    <property type="match status" value="1"/>
</dbReference>
<dbReference type="SUPFAM" id="SSF53800">
    <property type="entry name" value="Chelatase"/>
    <property type="match status" value="1"/>
</dbReference>
<dbReference type="PROSITE" id="PS00534">
    <property type="entry name" value="FERROCHELATASE"/>
    <property type="match status" value="1"/>
</dbReference>
<sequence>MTKKVGLLVMAYGTPYKDEDIERYYTDIRHGHKPSEEMIADLRGRYHAIGGLSPLAKITEAQAYGLEKALNDSQDEVEFKAYIGLKHIEPFIEDAVEAMHKDGIEEAISIVLAPHYSSFSVEAYNKRAKEAADKLGGPRINAINDWYKQPKFIQMWADRINETAKQIPADELLDTVLIVSAHSLPEKIKQHNDPYPNQLQETADFIFEKVVVPHYALGWQSEGKTGEPWLGPDVQDLTRELYGREKYKHFIYTPVGFVAEHLEVLYDNDYECKVVTDEVGAAYHRPPMPNSDPEFLEVLRTVVWEKYSN</sequence>
<organism>
    <name type="scientific">Listeria monocytogenes serovar 1/2a (strain ATCC BAA-679 / EGD-e)</name>
    <dbReference type="NCBI Taxonomy" id="169963"/>
    <lineage>
        <taxon>Bacteria</taxon>
        <taxon>Bacillati</taxon>
        <taxon>Bacillota</taxon>
        <taxon>Bacilli</taxon>
        <taxon>Bacillales</taxon>
        <taxon>Listeriaceae</taxon>
        <taxon>Listeria</taxon>
    </lineage>
</organism>
<gene>
    <name evidence="1 3" type="primary">cpfC</name>
    <name type="synonym">hemH</name>
    <name type="ordered locus">lmo2211</name>
</gene>